<reference key="1">
    <citation type="journal article" date="2002" name="DNA Res.">
        <title>Complete genome structure of the thermophilic cyanobacterium Thermosynechococcus elongatus BP-1.</title>
        <authorList>
            <person name="Nakamura Y."/>
            <person name="Kaneko T."/>
            <person name="Sato S."/>
            <person name="Ikeuchi M."/>
            <person name="Katoh H."/>
            <person name="Sasamoto S."/>
            <person name="Watanabe A."/>
            <person name="Iriguchi M."/>
            <person name="Kawashima K."/>
            <person name="Kimura T."/>
            <person name="Kishida Y."/>
            <person name="Kiyokawa C."/>
            <person name="Kohara M."/>
            <person name="Matsumoto M."/>
            <person name="Matsuno A."/>
            <person name="Nakazaki N."/>
            <person name="Shimpo S."/>
            <person name="Sugimoto M."/>
            <person name="Takeuchi C."/>
            <person name="Yamada M."/>
            <person name="Tabata S."/>
        </authorList>
    </citation>
    <scope>NUCLEOTIDE SEQUENCE [LARGE SCALE GENOMIC DNA]</scope>
    <source>
        <strain>NIES-2133 / IAM M-273 / BP-1</strain>
    </source>
</reference>
<gene>
    <name evidence="1" type="primary">prmC</name>
    <name type="ordered locus">tlr1836</name>
</gene>
<sequence length="291" mass="32621">MSGEALQRWWHWAQGIIPAPERESGLRELKQFLRAFTGLSPLEITLRRFPPQIHLKLPLTELQERWQRRWQERVPLQYLIGVAHWHDLELVVTPSVLIPRPETEELLAVVAATVPPWQQQGHWLDLGTGSGAIAIGLARLFPAALIHAVDCSSEALEVAQVNIQKYALGDRVRCYVGNWFDPIVPLQGQVQGIVSNPPYIPTSVVATLQPEVQYHEPLLALDGGTDGLQAIRQILETAPEYLQPQGWLFIELMATQGKAVAALAMATQAYERVEILRDLSGHDRFLLAQTP</sequence>
<organism>
    <name type="scientific">Thermosynechococcus vestitus (strain NIES-2133 / IAM M-273 / BP-1)</name>
    <dbReference type="NCBI Taxonomy" id="197221"/>
    <lineage>
        <taxon>Bacteria</taxon>
        <taxon>Bacillati</taxon>
        <taxon>Cyanobacteriota</taxon>
        <taxon>Cyanophyceae</taxon>
        <taxon>Acaryochloridales</taxon>
        <taxon>Thermosynechococcaceae</taxon>
        <taxon>Thermosynechococcus</taxon>
    </lineage>
</organism>
<comment type="function">
    <text evidence="1">Methylates the class 1 translation termination release factors RF1/PrfA and RF2/PrfB on the glutamine residue of the universally conserved GGQ motif.</text>
</comment>
<comment type="catalytic activity">
    <reaction evidence="1">
        <text>L-glutaminyl-[peptide chain release factor] + S-adenosyl-L-methionine = N(5)-methyl-L-glutaminyl-[peptide chain release factor] + S-adenosyl-L-homocysteine + H(+)</text>
        <dbReference type="Rhea" id="RHEA:42896"/>
        <dbReference type="Rhea" id="RHEA-COMP:10271"/>
        <dbReference type="Rhea" id="RHEA-COMP:10272"/>
        <dbReference type="ChEBI" id="CHEBI:15378"/>
        <dbReference type="ChEBI" id="CHEBI:30011"/>
        <dbReference type="ChEBI" id="CHEBI:57856"/>
        <dbReference type="ChEBI" id="CHEBI:59789"/>
        <dbReference type="ChEBI" id="CHEBI:61891"/>
        <dbReference type="EC" id="2.1.1.297"/>
    </reaction>
</comment>
<comment type="similarity">
    <text evidence="1">Belongs to the protein N5-glutamine methyltransferase family. PrmC subfamily.</text>
</comment>
<dbReference type="EC" id="2.1.1.297" evidence="1"/>
<dbReference type="EMBL" id="BA000039">
    <property type="protein sequence ID" value="BAC09388.1"/>
    <property type="molecule type" value="Genomic_DNA"/>
</dbReference>
<dbReference type="RefSeq" id="NP_682626.1">
    <property type="nucleotide sequence ID" value="NC_004113.1"/>
</dbReference>
<dbReference type="SMR" id="Q8DHV7"/>
<dbReference type="STRING" id="197221.gene:10748441"/>
<dbReference type="EnsemblBacteria" id="BAC09388">
    <property type="protein sequence ID" value="BAC09388"/>
    <property type="gene ID" value="BAC09388"/>
</dbReference>
<dbReference type="KEGG" id="tel:tlr1836"/>
<dbReference type="PATRIC" id="fig|197221.4.peg.1919"/>
<dbReference type="eggNOG" id="COG2890">
    <property type="taxonomic scope" value="Bacteria"/>
</dbReference>
<dbReference type="Proteomes" id="UP000000440">
    <property type="component" value="Chromosome"/>
</dbReference>
<dbReference type="GO" id="GO:0003676">
    <property type="term" value="F:nucleic acid binding"/>
    <property type="evidence" value="ECO:0007669"/>
    <property type="project" value="InterPro"/>
</dbReference>
<dbReference type="GO" id="GO:0102559">
    <property type="term" value="F:protein-(glutamine-N5) methyltransferase activity"/>
    <property type="evidence" value="ECO:0007669"/>
    <property type="project" value="UniProtKB-EC"/>
</dbReference>
<dbReference type="GO" id="GO:0036009">
    <property type="term" value="F:protein-glutamine N-methyltransferase activity"/>
    <property type="evidence" value="ECO:0007669"/>
    <property type="project" value="UniProtKB-UniRule"/>
</dbReference>
<dbReference type="GO" id="GO:0032259">
    <property type="term" value="P:methylation"/>
    <property type="evidence" value="ECO:0007669"/>
    <property type="project" value="UniProtKB-KW"/>
</dbReference>
<dbReference type="CDD" id="cd02440">
    <property type="entry name" value="AdoMet_MTases"/>
    <property type="match status" value="1"/>
</dbReference>
<dbReference type="Gene3D" id="3.40.50.150">
    <property type="entry name" value="Vaccinia Virus protein VP39"/>
    <property type="match status" value="1"/>
</dbReference>
<dbReference type="HAMAP" id="MF_02126">
    <property type="entry name" value="RF_methyltr_PrmC"/>
    <property type="match status" value="1"/>
</dbReference>
<dbReference type="InterPro" id="IPR002052">
    <property type="entry name" value="DNA_methylase_N6_adenine_CS"/>
</dbReference>
<dbReference type="InterPro" id="IPR004556">
    <property type="entry name" value="HemK-like"/>
</dbReference>
<dbReference type="InterPro" id="IPR052663">
    <property type="entry name" value="RF_glutamine_MTase_cyano"/>
</dbReference>
<dbReference type="InterPro" id="IPR019874">
    <property type="entry name" value="RF_methyltr_PrmC"/>
</dbReference>
<dbReference type="InterPro" id="IPR029063">
    <property type="entry name" value="SAM-dependent_MTases_sf"/>
</dbReference>
<dbReference type="InterPro" id="IPR007848">
    <property type="entry name" value="Small_mtfrase_dom"/>
</dbReference>
<dbReference type="NCBIfam" id="TIGR00536">
    <property type="entry name" value="hemK_fam"/>
    <property type="match status" value="1"/>
</dbReference>
<dbReference type="NCBIfam" id="TIGR03534">
    <property type="entry name" value="RF_mod_PrmC"/>
    <property type="match status" value="1"/>
</dbReference>
<dbReference type="PANTHER" id="PTHR47441">
    <property type="match status" value="1"/>
</dbReference>
<dbReference type="PANTHER" id="PTHR47441:SF3">
    <property type="entry name" value="RELEASE FACTOR GLUTAMINE METHYLTRANSFERASE"/>
    <property type="match status" value="1"/>
</dbReference>
<dbReference type="Pfam" id="PF05175">
    <property type="entry name" value="MTS"/>
    <property type="match status" value="1"/>
</dbReference>
<dbReference type="SUPFAM" id="SSF53335">
    <property type="entry name" value="S-adenosyl-L-methionine-dependent methyltransferases"/>
    <property type="match status" value="1"/>
</dbReference>
<proteinExistence type="inferred from homology"/>
<feature type="chain" id="PRO_0000414547" description="Release factor glutamine methyltransferase">
    <location>
        <begin position="1"/>
        <end position="291"/>
    </location>
</feature>
<feature type="binding site" evidence="1">
    <location>
        <begin position="127"/>
        <end position="131"/>
    </location>
    <ligand>
        <name>S-adenosyl-L-methionine</name>
        <dbReference type="ChEBI" id="CHEBI:59789"/>
    </ligand>
</feature>
<feature type="binding site" evidence="1">
    <location>
        <position position="150"/>
    </location>
    <ligand>
        <name>S-adenosyl-L-methionine</name>
        <dbReference type="ChEBI" id="CHEBI:59789"/>
    </ligand>
</feature>
<feature type="binding site" evidence="1">
    <location>
        <position position="179"/>
    </location>
    <ligand>
        <name>S-adenosyl-L-methionine</name>
        <dbReference type="ChEBI" id="CHEBI:59789"/>
    </ligand>
</feature>
<feature type="binding site" evidence="1">
    <location>
        <begin position="196"/>
        <end position="199"/>
    </location>
    <ligand>
        <name>substrate</name>
    </ligand>
</feature>
<feature type="binding site" evidence="1">
    <location>
        <position position="196"/>
    </location>
    <ligand>
        <name>S-adenosyl-L-methionine</name>
        <dbReference type="ChEBI" id="CHEBI:59789"/>
    </ligand>
</feature>
<keyword id="KW-0489">Methyltransferase</keyword>
<keyword id="KW-1185">Reference proteome</keyword>
<keyword id="KW-0949">S-adenosyl-L-methionine</keyword>
<keyword id="KW-0808">Transferase</keyword>
<evidence type="ECO:0000255" key="1">
    <source>
        <dbReference type="HAMAP-Rule" id="MF_02126"/>
    </source>
</evidence>
<name>PRMC_THEVB</name>
<protein>
    <recommendedName>
        <fullName evidence="1">Release factor glutamine methyltransferase</fullName>
        <shortName evidence="1">RF MTase</shortName>
        <ecNumber evidence="1">2.1.1.297</ecNumber>
    </recommendedName>
    <alternativeName>
        <fullName evidence="1">N5-glutamine methyltransferase PrmC</fullName>
    </alternativeName>
    <alternativeName>
        <fullName evidence="1">Protein-(glutamine-N5) MTase PrmC</fullName>
    </alternativeName>
    <alternativeName>
        <fullName evidence="1">Protein-glutamine N-methyltransferase PrmC</fullName>
    </alternativeName>
</protein>
<accession>Q8DHV7</accession>